<sequence length="269" mass="30691">MTSSTAARQLGFEPFASTAPTELRASSDVIHAAYRQVFQVFGNDHVMQSERLTSAESLLQQGNISVRDFVRLLAQSELYRQKFFYSTPQVRFIELNYKHLLGRAPYDESEISYHVNLYTEKGYEAEINSYIDSAEYQESFGERIVPHYRGFETQPGQKTVGFNRMFQIYRGYANSDRSQGKNKSAWLTQDLALNLASNIQTPNFGKGLTGVVAGDRGQLYRVRVIQADRGRTTQIRRSIQEYLVSYDQLSPTLQRLNQRGSRVVNISPA</sequence>
<feature type="initiator methionine" description="Removed" evidence="3">
    <location>
        <position position="1"/>
    </location>
</feature>
<feature type="chain" id="PRO_0000199216" description="Phycobilisome 37.5 kDa linker polypeptide, phycocyanin-associated, rod">
    <location>
        <begin position="2"/>
        <end position="269"/>
    </location>
</feature>
<feature type="domain" description="PBS-linker" evidence="2">
    <location>
        <begin position="2"/>
        <end position="177"/>
    </location>
</feature>
<feature type="domain" description="CpcD-like" evidence="1">
    <location>
        <begin position="217"/>
        <end position="269"/>
    </location>
</feature>
<proteinExistence type="evidence at protein level"/>
<reference key="1">
    <citation type="journal article" date="1987" name="J. Bacteriol.">
        <title>Isolation and characterization of light-regulated phycobilisome linker polypeptide genes and their transcription as a polycistronic mRNA.</title>
        <authorList>
            <person name="Lomax T.L."/>
            <person name="Conley P.B."/>
            <person name="Schilling J."/>
            <person name="Grossman A.R."/>
        </authorList>
    </citation>
    <scope>NUCLEOTIDE SEQUENCE [GENOMIC DNA]</scope>
</reference>
<reference key="2">
    <citation type="journal article" date="1992" name="FEBS Lett.">
        <title>Three C-phycoerythrin-associated linker polypeptides in the phycobilisome of green-light-grown Calothrix sp. PCC 7601 (cyanobacteria).</title>
        <authorList>
            <person name="Glauser M."/>
            <person name="Sidler W.A."/>
            <person name="Graham K.W."/>
            <person name="Bryant D.A."/>
            <person name="Frank G."/>
            <person name="Wehrli E."/>
            <person name="Zuber H."/>
        </authorList>
    </citation>
    <scope>PROTEIN SEQUENCE OF 2-8</scope>
</reference>
<comment type="function">
    <text>Rod linker protein, associated with phycocyanin. Linker polypeptides determine the state of aggregation and the location of the disk-shaped phycobiliprotein units within the phycobilisome and modulate their spectroscopic properties in order to mediate a directed and optimal energy transfer.</text>
</comment>
<comment type="subcellular location">
    <subcellularLocation>
        <location>Cellular thylakoid membrane</location>
        <topology>Peripheral membrane protein</topology>
        <orientation>Cytoplasmic side</orientation>
    </subcellularLocation>
    <text>Associated with phycocyanin.</text>
</comment>
<comment type="similarity">
    <text evidence="2">Belongs to the phycobilisome linker protein family.</text>
</comment>
<protein>
    <recommendedName>
        <fullName>Phycobilisome 37.5 kDa linker polypeptide, phycocyanin-associated, rod</fullName>
        <shortName>L-37.5/R</shortName>
    </recommendedName>
</protein>
<gene>
    <name type="primary">cpcH2</name>
</gene>
<keyword id="KW-0042">Antenna complex</keyword>
<keyword id="KW-0903">Direct protein sequencing</keyword>
<keyword id="KW-0472">Membrane</keyword>
<keyword id="KW-0602">Photosynthesis</keyword>
<keyword id="KW-0605">Phycobilisome</keyword>
<keyword id="KW-0793">Thylakoid</keyword>
<evidence type="ECO:0000255" key="1">
    <source>
        <dbReference type="PROSITE-ProRule" id="PRU00771"/>
    </source>
</evidence>
<evidence type="ECO:0000255" key="2">
    <source>
        <dbReference type="PROSITE-ProRule" id="PRU00775"/>
    </source>
</evidence>
<evidence type="ECO:0000269" key="3">
    <source>
    </source>
</evidence>
<dbReference type="EMBL" id="M16490">
    <property type="protein sequence ID" value="AAA24886.1"/>
    <property type="molecule type" value="Genomic_DNA"/>
</dbReference>
<dbReference type="PIR" id="A25974">
    <property type="entry name" value="A25974"/>
</dbReference>
<dbReference type="SMR" id="P11401"/>
<dbReference type="GO" id="GO:0030089">
    <property type="term" value="C:phycobilisome"/>
    <property type="evidence" value="ECO:0007669"/>
    <property type="project" value="UniProtKB-KW"/>
</dbReference>
<dbReference type="GO" id="GO:0031676">
    <property type="term" value="C:plasma membrane-derived thylakoid membrane"/>
    <property type="evidence" value="ECO:0007669"/>
    <property type="project" value="UniProtKB-SubCell"/>
</dbReference>
<dbReference type="GO" id="GO:0015979">
    <property type="term" value="P:photosynthesis"/>
    <property type="evidence" value="ECO:0007669"/>
    <property type="project" value="UniProtKB-KW"/>
</dbReference>
<dbReference type="Gene3D" id="1.10.3130.20">
    <property type="entry name" value="Phycobilisome linker domain"/>
    <property type="match status" value="1"/>
</dbReference>
<dbReference type="InterPro" id="IPR008213">
    <property type="entry name" value="CpcD-like_dom"/>
</dbReference>
<dbReference type="InterPro" id="IPR001297">
    <property type="entry name" value="PBS_linker_dom"/>
</dbReference>
<dbReference type="InterPro" id="IPR038255">
    <property type="entry name" value="PBS_linker_sf"/>
</dbReference>
<dbReference type="InterPro" id="IPR016470">
    <property type="entry name" value="Phycobilisome"/>
</dbReference>
<dbReference type="PANTHER" id="PTHR34011:SF6">
    <property type="entry name" value="PHYCOBILIPROTEIN APCE"/>
    <property type="match status" value="1"/>
</dbReference>
<dbReference type="PANTHER" id="PTHR34011">
    <property type="entry name" value="PHYCOBILISOME 32.1 KDA LINKER POLYPEPTIDE, PHYCOCYANIN-ASSOCIATED, ROD 2-RELATED"/>
    <property type="match status" value="1"/>
</dbReference>
<dbReference type="Pfam" id="PF01383">
    <property type="entry name" value="CpcD"/>
    <property type="match status" value="1"/>
</dbReference>
<dbReference type="Pfam" id="PF00427">
    <property type="entry name" value="PBS_linker_poly"/>
    <property type="match status" value="1"/>
</dbReference>
<dbReference type="PIRSF" id="PIRSF005898">
    <property type="entry name" value="Phycobilisome_CpeC/CpcI"/>
    <property type="match status" value="1"/>
</dbReference>
<dbReference type="SMART" id="SM01094">
    <property type="entry name" value="CpcD"/>
    <property type="match status" value="1"/>
</dbReference>
<dbReference type="PROSITE" id="PS51441">
    <property type="entry name" value="CPCD_LIKE"/>
    <property type="match status" value="1"/>
</dbReference>
<dbReference type="PROSITE" id="PS51445">
    <property type="entry name" value="PBS_LINKER"/>
    <property type="match status" value="1"/>
</dbReference>
<organism>
    <name type="scientific">Microchaete diplosiphon</name>
    <name type="common">Fremyella diplosiphon</name>
    <dbReference type="NCBI Taxonomy" id="1197"/>
    <lineage>
        <taxon>Bacteria</taxon>
        <taxon>Bacillati</taxon>
        <taxon>Cyanobacteriota</taxon>
        <taxon>Cyanophyceae</taxon>
        <taxon>Nostocales</taxon>
        <taxon>Rivulariaceae</taxon>
        <taxon>Microchaete</taxon>
    </lineage>
</organism>
<name>PYR5_MICDP</name>
<accession>P11401</accession>